<accession>Q9Z207</accession>
<feature type="chain" id="PRO_0000194898" description="Protein diaphanous homolog 3">
    <location>
        <begin position="1"/>
        <end position="1171"/>
    </location>
</feature>
<feature type="domain" description="GBD/FH3" evidence="4">
    <location>
        <begin position="93"/>
        <end position="455"/>
    </location>
</feature>
<feature type="domain" description="FH1">
    <location>
        <begin position="540"/>
        <end position="610"/>
    </location>
</feature>
<feature type="domain" description="FH2" evidence="5">
    <location>
        <begin position="615"/>
        <end position="1013"/>
    </location>
</feature>
<feature type="domain" description="DAD" evidence="3">
    <location>
        <begin position="1036"/>
        <end position="1066"/>
    </location>
</feature>
<feature type="region of interest" description="Disordered" evidence="6">
    <location>
        <begin position="1"/>
        <end position="40"/>
    </location>
</feature>
<feature type="region of interest" description="Disordered" evidence="6">
    <location>
        <begin position="60"/>
        <end position="95"/>
    </location>
</feature>
<feature type="region of interest" description="Disordered" evidence="6">
    <location>
        <begin position="532"/>
        <end position="601"/>
    </location>
</feature>
<feature type="coiled-coil region" evidence="2">
    <location>
        <begin position="373"/>
        <end position="403"/>
    </location>
</feature>
<feature type="coiled-coil region" evidence="2">
    <location>
        <begin position="478"/>
        <end position="533"/>
    </location>
</feature>
<feature type="coiled-coil region" evidence="2">
    <location>
        <begin position="887"/>
        <end position="918"/>
    </location>
</feature>
<feature type="coiled-coil region" evidence="2">
    <location>
        <begin position="988"/>
        <end position="1038"/>
    </location>
</feature>
<feature type="short sequence motif" description="Nuclear localization signal" evidence="8">
    <location>
        <begin position="16"/>
        <end position="39"/>
    </location>
</feature>
<feature type="short sequence motif" description="Nuclear export signal" evidence="8">
    <location>
        <begin position="1162"/>
        <end position="1171"/>
    </location>
</feature>
<feature type="compositionally biased region" description="Basic and acidic residues" evidence="6">
    <location>
        <begin position="1"/>
        <end position="15"/>
    </location>
</feature>
<feature type="compositionally biased region" description="Low complexity" evidence="6">
    <location>
        <begin position="76"/>
        <end position="86"/>
    </location>
</feature>
<feature type="compositionally biased region" description="Pro residues" evidence="6">
    <location>
        <begin position="553"/>
        <end position="596"/>
    </location>
</feature>
<feature type="modified residue" description="Phosphothreonine" evidence="1">
    <location>
        <position position="47"/>
    </location>
</feature>
<feature type="modified residue" description="Phosphoserine" evidence="1">
    <location>
        <position position="56"/>
    </location>
</feature>
<feature type="modified residue" description="Phosphoserine" evidence="1">
    <location>
        <position position="154"/>
    </location>
</feature>
<feature type="modified residue" description="Phosphoserine" evidence="1">
    <location>
        <position position="604"/>
    </location>
</feature>
<feature type="modified residue" description="Phosphoserine" evidence="1">
    <location>
        <position position="1072"/>
    </location>
</feature>
<feature type="modified residue" description="Phosphoserine" evidence="1">
    <location>
        <position position="1157"/>
    </location>
</feature>
<feature type="mutagenesis site" description="Decreased accumulation in the nucleus." evidence="8">
    <original>RK</original>
    <variation>AA</variation>
    <location>
        <begin position="18"/>
        <end position="19"/>
    </location>
</feature>
<feature type="mutagenesis site" description="Abolished accumulation in the nucleus." evidence="8">
    <original>KR</original>
    <variation>AA</variation>
    <location>
        <begin position="35"/>
        <end position="36"/>
    </location>
</feature>
<feature type="mutagenesis site" description="No loss of ubiquitination; when associated with R-119, R-493 and R-494." evidence="9">
    <original>K</original>
    <variation>R</variation>
    <location>
        <position position="118"/>
    </location>
</feature>
<feature type="mutagenesis site" description="No loss of ubiquitination; when associated with R-118, R-493 and R-494." evidence="9">
    <original>K</original>
    <variation>R</variation>
    <location>
        <position position="119"/>
    </location>
</feature>
<feature type="mutagenesis site" description="Does not affect subcellular location." evidence="8">
    <original>VK</original>
    <variation>AA</variation>
    <location>
        <begin position="268"/>
        <end position="269"/>
    </location>
</feature>
<feature type="mutagenesis site" description="Does not affect subcellular location." evidence="8">
    <original>VCIV</original>
    <variation>ACIA</variation>
    <location>
        <begin position="274"/>
        <end position="277"/>
    </location>
</feature>
<feature type="mutagenesis site" description="No loss of ubiquitination; when associated with R-118, R-119 and R-494." evidence="9">
    <original>K</original>
    <variation>R</variation>
    <location>
        <position position="493"/>
    </location>
</feature>
<feature type="mutagenesis site" description="No loss of ubiquitination; when associated with R-118, R-119 and R-493." evidence="9">
    <original>K</original>
    <variation>R</variation>
    <location>
        <position position="494"/>
    </location>
</feature>
<feature type="mutagenesis site" description="Impaired ability to release autoinhibition, leading to defects in actin nucleation and elongation factor activity in the nucleus." evidence="10">
    <original>M</original>
    <variation>A</variation>
    <location>
        <position position="1041"/>
    </location>
</feature>
<feature type="mutagenesis site" description="Accumulation in the nucleus due to defects in nuclear export." evidence="8 10">
    <original>L</original>
    <variation>G</variation>
    <location>
        <position position="1168"/>
    </location>
</feature>
<keyword id="KW-0175">Coiled coil</keyword>
<keyword id="KW-0963">Cytoplasm</keyword>
<keyword id="KW-0539">Nucleus</keyword>
<keyword id="KW-0597">Phosphoprotein</keyword>
<keyword id="KW-1185">Reference proteome</keyword>
<keyword id="KW-0677">Repeat</keyword>
<keyword id="KW-0832">Ubl conjugation</keyword>
<name>DIAP3_MOUSE</name>
<protein>
    <recommendedName>
        <fullName>Protein diaphanous homolog 3</fullName>
    </recommendedName>
    <alternativeName>
        <fullName>Diaphanous-related formin-3</fullName>
        <shortName>DRF3</shortName>
    </alternativeName>
    <alternativeName>
        <fullName>p134mDIA2</fullName>
        <shortName evidence="11">mDIA2</shortName>
    </alternativeName>
</protein>
<sequence>MERHRARALGRDSKSSRRKGLQSAPPAGPYEPGEKRPKLHLNIRTLTDDMLDKFASIRIPGSKKERPPLPHLKTVSGISDSSSLSSETMENNPKALPESEVLKLFEKMMEDMNLNEDKKAPLREKDFGIKKEMVMQYINTASKTGSLRSSRQISPQEFLHELKMGYTDERLFTYLESLRVSLTSHPVSWVQSFGHEGLGLLLDILEKLINGQIQEKVVKKTQHKVIQCLRALMNTQYGLERIMSDKRSLSLLAKAMDPRQPAMMADVVKLLSAVCIVGEESILEEVLEALTSAGEERKIDRFFSIVEGLRHNSVNLQVACMQLINALVTSPDDLDFRLHLRNEFMRCGLKEILPNLKGIKNDGLDIQLKVFDEHKEEDLSEFFHRLEDIRAELDEASDVYSMLWDTVKETRAEGHFLSILQHLLLIRNDRFIREQYFKLIDECVSQIVLHRDGTDPDFTYRKRLDLDLSQFVDVCIDQAKLDEWEEKASEHCKKFEKECTDHQETQAQLQKREAKINELQAELQAFKSQFGALPPGTKIPLQPSVEGEAGPSALPPAPPALSGGVPPPPPPPPPPPPPLPGMPMPFGGPVPPPPPLGFLGGQSSIPLNLPFGLKPKKEFKPEISMRRLNWLKIGPNEMSENCFWIKVNENKYENRDLLCKLENTFCCQEKEKRNTNDFDEKKVIKKRMKELKFLDPKIAQNLSIFLSSFRVPYEKIRTMILEVDETQLSESMIQNLIKHLPDEEQLKSLSQFRSDYNSLCEPEQFAVVMSNVKRLRPRLSAILFKLQFEEQVNNIKPDIMAVSTACEEIKKSKGFSKLLELVLLMGNYMNAGSRNAQTFGFDLSSLCKLKDTKSADQKTTLLHFLVDVCEEKHADILHFVDDLAHLDKASRVSVEMLEKNVKQMGRQLQQLEKNLETFPPPEDLHDKFVIKMSSFVISANEQYEKLSTLLGSMTQLYQSIMGYYAVDMKKVSVEEFFNDLNNFRTSFMLALKENIKKREAAEKEKRARIAKERAEKERLERQQEKKRLLEMKTEGDETGVMDSLLEALQSGAAFRDRRKRTPKLKDIRQSLSPMSQRPVLKVCNHENQKMQLTEGSRPHHSINCNSTRTPVAKELNYNLDTHASTGRIKAVEKEACNAESNKKKEMELLGSVAKSESVPEVEALLARLRAL</sequence>
<gene>
    <name type="primary">Diaph3</name>
    <name type="synonym">Diap3</name>
</gene>
<comment type="function">
    <text evidence="7 10">Actin nucleation and elongation factor required for the assembly of F-actin structures, such as actin cables and stress fibers (PubMed:10678165, PubMed:23558171). Required for cytokinesis, stress fiber formation and transcriptional activation of the serum response factor (PubMed:10678165, PubMed:23558171). Binds to GTP-bound form of Rho and to profilin: acts in a Rho-dependent manner to recruit profilin to the membrane, where it promotes actin polymerization (PubMed:10678165). DFR proteins couple Rho and Src tyrosine kinase during signaling and the regulation of actin dynamics (PubMed:10678165). Also acts as an actin nucleation and elongation factor in the nucleus by promoting nuclear actin polymerization inside the nucleus to drive serum-dependent SRF-MRTFA activity (PubMed:23558171).</text>
</comment>
<comment type="interaction">
    <interactant intactId="EBI-6550123">
        <id>Q9Z207</id>
    </interactant>
    <interactant intactId="EBI-375511">
        <id>Q8CBW3</id>
        <label>Abi1</label>
    </interactant>
    <organismsDiffer>false</organismsDiffer>
    <experiments>2</experiments>
</comment>
<comment type="subcellular location">
    <subcellularLocation>
        <location evidence="8 10">Cytoplasm</location>
    </subcellularLocation>
    <subcellularLocation>
        <location evidence="8 10">Nucleus</location>
    </subcellularLocation>
    <text evidence="1 8">During mitosis, co-localizes with the actin-rich cleavage furrow and with the microtubule-rich central spindle during cytokinesis (By similarity). Shuttles between the cytoplasm and the nucleus (PubMed:19117945).</text>
</comment>
<comment type="developmental stage">
    <text evidence="9">Increased expression in S phase and mitotic cells; levels decrease as cells enter in G0/G1 phase due to proteasomal degradation (at protein level).</text>
</comment>
<comment type="domain">
    <text evidence="10">The DAD domain regulates activation via by an autoinhibitory interaction with the GBD/FH3 domain (PubMed:23558171). This autoinhibition is released upon competitive binding of an activated GTPase (PubMed:23558171). The release of DAD allows the FH2 domain to then nucleate and elongate nonbranched actin filaments (PubMed:23558171).</text>
</comment>
<comment type="PTM">
    <text evidence="9">Ubiquitinated.</text>
</comment>
<comment type="similarity">
    <text evidence="12">Belongs to the formin homology family. Diaphanous subfamily.</text>
</comment>
<organism>
    <name type="scientific">Mus musculus</name>
    <name type="common">Mouse</name>
    <dbReference type="NCBI Taxonomy" id="10090"/>
    <lineage>
        <taxon>Eukaryota</taxon>
        <taxon>Metazoa</taxon>
        <taxon>Chordata</taxon>
        <taxon>Craniata</taxon>
        <taxon>Vertebrata</taxon>
        <taxon>Euteleostomi</taxon>
        <taxon>Mammalia</taxon>
        <taxon>Eutheria</taxon>
        <taxon>Euarchontoglires</taxon>
        <taxon>Glires</taxon>
        <taxon>Rodentia</taxon>
        <taxon>Myomorpha</taxon>
        <taxon>Muroidea</taxon>
        <taxon>Muridae</taxon>
        <taxon>Murinae</taxon>
        <taxon>Mus</taxon>
        <taxon>Mus</taxon>
    </lineage>
</organism>
<reference key="1">
    <citation type="journal article" date="1998" name="J. Biol. Chem.">
        <title>Analysis of RhoA-binding proteins reveals an interaction domain conserved in heterotrimeric G protein beta subunits and the yeast response regulator protein Skn7.</title>
        <authorList>
            <person name="Alberts A.S."/>
            <person name="Bouquin N."/>
            <person name="Johnston L.H."/>
            <person name="Treisman R."/>
        </authorList>
    </citation>
    <scope>NUCLEOTIDE SEQUENCE [MRNA]</scope>
</reference>
<reference key="2">
    <citation type="submission" date="1998-09" db="EMBL/GenBank/DDBJ databases">
        <authorList>
            <person name="Tominaga T."/>
            <person name="Sahai E."/>
            <person name="Treisman R.H."/>
            <person name="Alberts A.S."/>
        </authorList>
    </citation>
    <scope>NUCLEOTIDE SEQUENCE [MRNA]</scope>
</reference>
<reference key="3">
    <citation type="journal article" date="2000" name="Mol. Cell">
        <title>Diaphanous-related formins bridge Rho GTPase and Src tyrosine kinase signaling.</title>
        <authorList>
            <person name="Tominaga T."/>
            <person name="Sahai E."/>
            <person name="Chardin P."/>
            <person name="McCormick F."/>
            <person name="Courtneidge S.A."/>
            <person name="Alberts A.S."/>
        </authorList>
    </citation>
    <scope>FUNCTION</scope>
</reference>
<reference key="4">
    <citation type="journal article" date="2009" name="J. Biol. Chem.">
        <title>mDia2 shuttles between the nucleus and the cytoplasm through the importin-{alpha}/{beta}- and CRM1-mediated nuclear transport mechanism.</title>
        <authorList>
            <person name="Miki T."/>
            <person name="Okawa K."/>
            <person name="Sekimoto T."/>
            <person name="Yoneda Y."/>
            <person name="Watanabe S."/>
            <person name="Ishizaki T."/>
            <person name="Narumiya S."/>
        </authorList>
    </citation>
    <scope>SUBCELLULAR LOCATION</scope>
    <scope>MUTAGENESIS OF 18-ARG-LYS-19; 35-LYS-ARG-36; 268-VAL-LYS-269; 274-VAL--VAL-277 AND LEU-1168</scope>
</reference>
<reference key="5">
    <citation type="journal article" date="2013" name="Science">
        <title>Nuclear actin network assembly by formins regulates the SRF coactivator MAL.</title>
        <authorList>
            <person name="Baarlink C."/>
            <person name="Wang H."/>
            <person name="Grosse R."/>
        </authorList>
    </citation>
    <scope>FUNCTION</scope>
    <scope>SUBCELLULAR LOCATION</scope>
    <scope>DOMAIN</scope>
    <scope>MUTAGENESIS OF MET-1041 AND LEU-1168</scope>
</reference>
<reference key="6">
    <citation type="journal article" date="2009" name="J. Biol. Chem.">
        <title>Ubiquitin-mediated degradation of the formin mDia2 upon completion of cell division.</title>
        <authorList>
            <person name="DeWard A.D."/>
            <person name="Alberts A.S."/>
        </authorList>
    </citation>
    <scope>UBIQUITINATION</scope>
    <scope>DEVELOPMENTAL STAGE</scope>
    <scope>MUTAGENESIS OF LYS-118; LYS-119; LYS-493 AND LYS-494</scope>
</reference>
<proteinExistence type="evidence at protein level"/>
<dbReference type="EMBL" id="AF094519">
    <property type="protein sequence ID" value="AAC71771.1"/>
    <property type="molecule type" value="mRNA"/>
</dbReference>
<dbReference type="CCDS" id="CCDS36990.1"/>
<dbReference type="PIR" id="T17454">
    <property type="entry name" value="T17454"/>
</dbReference>
<dbReference type="RefSeq" id="NP_062644.1">
    <property type="nucleotide sequence ID" value="NM_019670.2"/>
</dbReference>
<dbReference type="SMR" id="Q9Z207"/>
<dbReference type="BioGRID" id="207965">
    <property type="interactions" value="17"/>
</dbReference>
<dbReference type="CORUM" id="Q9Z207"/>
<dbReference type="DIP" id="DIP-29533N"/>
<dbReference type="FunCoup" id="Q9Z207">
    <property type="interactions" value="1477"/>
</dbReference>
<dbReference type="IntAct" id="Q9Z207">
    <property type="interactions" value="5"/>
</dbReference>
<dbReference type="MINT" id="Q9Z207"/>
<dbReference type="STRING" id="10090.ENSMUSP00000129420"/>
<dbReference type="iPTMnet" id="Q9Z207"/>
<dbReference type="PhosphoSitePlus" id="Q9Z207"/>
<dbReference type="PaxDb" id="10090-ENSMUSP00000022599"/>
<dbReference type="ProteomicsDB" id="279659"/>
<dbReference type="Pumba" id="Q9Z207"/>
<dbReference type="Antibodypedia" id="24286">
    <property type="antibodies" value="260 antibodies from 30 providers"/>
</dbReference>
<dbReference type="DNASU" id="56419"/>
<dbReference type="Ensembl" id="ENSMUST00000168889.3">
    <property type="protein sequence ID" value="ENSMUSP00000129420.2"/>
    <property type="gene ID" value="ENSMUSG00000022021.16"/>
</dbReference>
<dbReference type="GeneID" id="56419"/>
<dbReference type="KEGG" id="mmu:56419"/>
<dbReference type="UCSC" id="uc007uub.1">
    <property type="organism name" value="mouse"/>
</dbReference>
<dbReference type="AGR" id="MGI:1927222"/>
<dbReference type="CTD" id="81624"/>
<dbReference type="MGI" id="MGI:1927222">
    <property type="gene designation" value="Diaph3"/>
</dbReference>
<dbReference type="VEuPathDB" id="HostDB:ENSMUSG00000022021"/>
<dbReference type="eggNOG" id="KOG1924">
    <property type="taxonomic scope" value="Eukaryota"/>
</dbReference>
<dbReference type="GeneTree" id="ENSGT00940000157767"/>
<dbReference type="InParanoid" id="Q9Z207"/>
<dbReference type="OMA" id="IRNDCFI"/>
<dbReference type="OrthoDB" id="1104827at2759"/>
<dbReference type="PhylomeDB" id="Q9Z207"/>
<dbReference type="Reactome" id="R-MMU-5663220">
    <property type="pathway name" value="RHO GTPases Activate Formins"/>
</dbReference>
<dbReference type="Reactome" id="R-MMU-8980692">
    <property type="pathway name" value="RHOA GTPase cycle"/>
</dbReference>
<dbReference type="Reactome" id="R-MMU-9013026">
    <property type="pathway name" value="RHOB GTPase cycle"/>
</dbReference>
<dbReference type="Reactome" id="R-MMU-9013106">
    <property type="pathway name" value="RHOC GTPase cycle"/>
</dbReference>
<dbReference type="Reactome" id="R-MMU-9013149">
    <property type="pathway name" value="RAC1 GTPase cycle"/>
</dbReference>
<dbReference type="Reactome" id="R-MMU-9013404">
    <property type="pathway name" value="RAC2 GTPase cycle"/>
</dbReference>
<dbReference type="Reactome" id="R-MMU-9013405">
    <property type="pathway name" value="RHOD GTPase cycle"/>
</dbReference>
<dbReference type="Reactome" id="R-MMU-9013406">
    <property type="pathway name" value="RHOQ GTPase cycle"/>
</dbReference>
<dbReference type="Reactome" id="R-MMU-9013408">
    <property type="pathway name" value="RHOG GTPase cycle"/>
</dbReference>
<dbReference type="Reactome" id="R-MMU-9013423">
    <property type="pathway name" value="RAC3 GTPase cycle"/>
</dbReference>
<dbReference type="Reactome" id="R-MMU-9035034">
    <property type="pathway name" value="RHOF GTPase cycle"/>
</dbReference>
<dbReference type="BioGRID-ORCS" id="56419">
    <property type="hits" value="2 hits in 46 CRISPR screens"/>
</dbReference>
<dbReference type="CD-CODE" id="01CA17F3">
    <property type="entry name" value="Centrosome"/>
</dbReference>
<dbReference type="CD-CODE" id="7BB9AA6C">
    <property type="entry name" value="Actin nucleator"/>
</dbReference>
<dbReference type="ChiTaRS" id="Diaph3">
    <property type="organism name" value="mouse"/>
</dbReference>
<dbReference type="PRO" id="PR:Q9Z207"/>
<dbReference type="Proteomes" id="UP000000589">
    <property type="component" value="Chromosome 14"/>
</dbReference>
<dbReference type="RNAct" id="Q9Z207">
    <property type="molecule type" value="protein"/>
</dbReference>
<dbReference type="Bgee" id="ENSMUSG00000022021">
    <property type="expression patterns" value="Expressed in blood and 164 other cell types or tissues"/>
</dbReference>
<dbReference type="ExpressionAtlas" id="Q9Z207">
    <property type="expression patterns" value="baseline and differential"/>
</dbReference>
<dbReference type="GO" id="GO:0032432">
    <property type="term" value="C:actin filament bundle"/>
    <property type="evidence" value="ECO:0000314"/>
    <property type="project" value="MGI"/>
</dbReference>
<dbReference type="GO" id="GO:0032154">
    <property type="term" value="C:cleavage furrow"/>
    <property type="evidence" value="ECO:0000314"/>
    <property type="project" value="MGI"/>
</dbReference>
<dbReference type="GO" id="GO:0005737">
    <property type="term" value="C:cytoplasm"/>
    <property type="evidence" value="ECO:0000314"/>
    <property type="project" value="UniProtKB"/>
</dbReference>
<dbReference type="GO" id="GO:0000813">
    <property type="term" value="C:ESCRT I complex"/>
    <property type="evidence" value="ECO:0000315"/>
    <property type="project" value="MGI"/>
</dbReference>
<dbReference type="GO" id="GO:0031941">
    <property type="term" value="C:filamentous actin"/>
    <property type="evidence" value="ECO:0000314"/>
    <property type="project" value="MGI"/>
</dbReference>
<dbReference type="GO" id="GO:0005815">
    <property type="term" value="C:microtubule organizing center"/>
    <property type="evidence" value="ECO:0000314"/>
    <property type="project" value="MGI"/>
</dbReference>
<dbReference type="GO" id="GO:0005634">
    <property type="term" value="C:nucleus"/>
    <property type="evidence" value="ECO:0000314"/>
    <property type="project" value="UniProtKB"/>
</dbReference>
<dbReference type="GO" id="GO:0097470">
    <property type="term" value="C:ribbon synapse"/>
    <property type="evidence" value="ECO:0000314"/>
    <property type="project" value="MGI"/>
</dbReference>
<dbReference type="GO" id="GO:0000922">
    <property type="term" value="C:spindle pole"/>
    <property type="evidence" value="ECO:0000314"/>
    <property type="project" value="MGI"/>
</dbReference>
<dbReference type="GO" id="GO:1990427">
    <property type="term" value="C:stereocilia tip-link density"/>
    <property type="evidence" value="ECO:0000314"/>
    <property type="project" value="MGI"/>
</dbReference>
<dbReference type="GO" id="GO:0003779">
    <property type="term" value="F:actin binding"/>
    <property type="evidence" value="ECO:0000314"/>
    <property type="project" value="MGI"/>
</dbReference>
<dbReference type="GO" id="GO:0008092">
    <property type="term" value="F:cytoskeletal protein binding"/>
    <property type="evidence" value="ECO:0000314"/>
    <property type="project" value="MGI"/>
</dbReference>
<dbReference type="GO" id="GO:0008017">
    <property type="term" value="F:microtubule binding"/>
    <property type="evidence" value="ECO:0000314"/>
    <property type="project" value="MGI"/>
</dbReference>
<dbReference type="GO" id="GO:0042803">
    <property type="term" value="F:protein homodimerization activity"/>
    <property type="evidence" value="ECO:0000314"/>
    <property type="project" value="MGI"/>
</dbReference>
<dbReference type="GO" id="GO:0031267">
    <property type="term" value="F:small GTPase binding"/>
    <property type="evidence" value="ECO:0007669"/>
    <property type="project" value="InterPro"/>
</dbReference>
<dbReference type="GO" id="GO:0051764">
    <property type="term" value="P:actin crosslink formation"/>
    <property type="evidence" value="ECO:0000314"/>
    <property type="project" value="MGI"/>
</dbReference>
<dbReference type="GO" id="GO:0030036">
    <property type="term" value="P:actin cytoskeleton organization"/>
    <property type="evidence" value="ECO:0000314"/>
    <property type="project" value="UniProtKB"/>
</dbReference>
<dbReference type="GO" id="GO:0051017">
    <property type="term" value="P:actin filament bundle assembly"/>
    <property type="evidence" value="ECO:0000315"/>
    <property type="project" value="MGI"/>
</dbReference>
<dbReference type="GO" id="GO:0007015">
    <property type="term" value="P:actin filament organization"/>
    <property type="evidence" value="ECO:0000315"/>
    <property type="project" value="MGI"/>
</dbReference>
<dbReference type="GO" id="GO:0030041">
    <property type="term" value="P:actin filament polymerization"/>
    <property type="evidence" value="ECO:0000314"/>
    <property type="project" value="UniProtKB"/>
</dbReference>
<dbReference type="GO" id="GO:0045010">
    <property type="term" value="P:actin nucleation"/>
    <property type="evidence" value="ECO:0000314"/>
    <property type="project" value="MGI"/>
</dbReference>
<dbReference type="GO" id="GO:0061909">
    <property type="term" value="P:autophagosome-lysosome fusion"/>
    <property type="evidence" value="ECO:0000315"/>
    <property type="project" value="MGI"/>
</dbReference>
<dbReference type="GO" id="GO:0030030">
    <property type="term" value="P:cell projection organization"/>
    <property type="evidence" value="ECO:0000314"/>
    <property type="project" value="MGI"/>
</dbReference>
<dbReference type="GO" id="GO:0007059">
    <property type="term" value="P:chromosome segregation"/>
    <property type="evidence" value="ECO:0000315"/>
    <property type="project" value="MGI"/>
</dbReference>
<dbReference type="GO" id="GO:0007010">
    <property type="term" value="P:cytoskeleton organization"/>
    <property type="evidence" value="ECO:0000314"/>
    <property type="project" value="UniProtKB"/>
</dbReference>
<dbReference type="GO" id="GO:0016197">
    <property type="term" value="P:endosomal transport"/>
    <property type="evidence" value="ECO:0000315"/>
    <property type="project" value="MGI"/>
</dbReference>
<dbReference type="GO" id="GO:0030218">
    <property type="term" value="P:erythrocyte differentiation"/>
    <property type="evidence" value="ECO:0000315"/>
    <property type="project" value="MGI"/>
</dbReference>
<dbReference type="GO" id="GO:0043131">
    <property type="term" value="P:erythrocyte enucleation"/>
    <property type="evidence" value="ECO:0000315"/>
    <property type="project" value="MGI"/>
</dbReference>
<dbReference type="GO" id="GO:0030010">
    <property type="term" value="P:establishment of cell polarity"/>
    <property type="evidence" value="ECO:0000315"/>
    <property type="project" value="MGI"/>
</dbReference>
<dbReference type="GO" id="GO:0010467">
    <property type="term" value="P:gene expression"/>
    <property type="evidence" value="ECO:0000314"/>
    <property type="project" value="MGI"/>
</dbReference>
<dbReference type="GO" id="GO:0060322">
    <property type="term" value="P:head development"/>
    <property type="evidence" value="ECO:0000315"/>
    <property type="project" value="MGI"/>
</dbReference>
<dbReference type="GO" id="GO:0001701">
    <property type="term" value="P:in utero embryonic development"/>
    <property type="evidence" value="ECO:0000315"/>
    <property type="project" value="MGI"/>
</dbReference>
<dbReference type="GO" id="GO:0060113">
    <property type="term" value="P:inner ear receptor cell differentiation"/>
    <property type="evidence" value="ECO:0000314"/>
    <property type="project" value="MGI"/>
</dbReference>
<dbReference type="GO" id="GO:0007229">
    <property type="term" value="P:integrin-mediated signaling pathway"/>
    <property type="evidence" value="ECO:0000315"/>
    <property type="project" value="MGI"/>
</dbReference>
<dbReference type="GO" id="GO:0030225">
    <property type="term" value="P:macrophage differentiation"/>
    <property type="evidence" value="ECO:0000315"/>
    <property type="project" value="MGI"/>
</dbReference>
<dbReference type="GO" id="GO:0000226">
    <property type="term" value="P:microtubule cytoskeleton organization"/>
    <property type="evidence" value="ECO:0000314"/>
    <property type="project" value="MGI"/>
</dbReference>
<dbReference type="GO" id="GO:0046785">
    <property type="term" value="P:microtubule polymerization"/>
    <property type="evidence" value="ECO:0000314"/>
    <property type="project" value="MGI"/>
</dbReference>
<dbReference type="GO" id="GO:0007026">
    <property type="term" value="P:negative regulation of microtubule depolymerization"/>
    <property type="evidence" value="ECO:0000314"/>
    <property type="project" value="MGI"/>
</dbReference>
<dbReference type="GO" id="GO:0030182">
    <property type="term" value="P:neuron differentiation"/>
    <property type="evidence" value="ECO:0000315"/>
    <property type="project" value="MGI"/>
</dbReference>
<dbReference type="GO" id="GO:0071800">
    <property type="term" value="P:podosome assembly"/>
    <property type="evidence" value="ECO:0000315"/>
    <property type="project" value="MGI"/>
</dbReference>
<dbReference type="GO" id="GO:0034367">
    <property type="term" value="P:protein-containing complex remodeling"/>
    <property type="evidence" value="ECO:0000315"/>
    <property type="project" value="MGI"/>
</dbReference>
<dbReference type="GO" id="GO:0007605">
    <property type="term" value="P:sensory perception of sound"/>
    <property type="evidence" value="ECO:0000314"/>
    <property type="project" value="MGI"/>
</dbReference>
<dbReference type="FunFam" id="1.20.58.630:FF:000001">
    <property type="entry name" value="Diaphanous related formin 1"/>
    <property type="match status" value="1"/>
</dbReference>
<dbReference type="FunFam" id="1.20.58.2220:FF:000003">
    <property type="entry name" value="protein diaphanous homolog 1 isoform X2"/>
    <property type="match status" value="1"/>
</dbReference>
<dbReference type="FunFam" id="1.10.238.150:FF:000002">
    <property type="entry name" value="protein diaphanous homolog 2 isoform X2"/>
    <property type="match status" value="1"/>
</dbReference>
<dbReference type="Gene3D" id="1.20.58.630">
    <property type="match status" value="1"/>
</dbReference>
<dbReference type="Gene3D" id="6.10.30.30">
    <property type="match status" value="1"/>
</dbReference>
<dbReference type="Gene3D" id="1.10.20.40">
    <property type="entry name" value="Formin, diaphanous GTPase-binding domain"/>
    <property type="match status" value="1"/>
</dbReference>
<dbReference type="Gene3D" id="1.20.58.2220">
    <property type="entry name" value="Formin, FH2 domain"/>
    <property type="match status" value="1"/>
</dbReference>
<dbReference type="Gene3D" id="1.10.238.150">
    <property type="entry name" value="Formin, FH3 diaphanous domain"/>
    <property type="match status" value="1"/>
</dbReference>
<dbReference type="Gene3D" id="1.25.10.10">
    <property type="entry name" value="Leucine-rich Repeat Variant"/>
    <property type="match status" value="1"/>
</dbReference>
<dbReference type="InterPro" id="IPR011989">
    <property type="entry name" value="ARM-like"/>
</dbReference>
<dbReference type="InterPro" id="IPR016024">
    <property type="entry name" value="ARM-type_fold"/>
</dbReference>
<dbReference type="InterPro" id="IPR014767">
    <property type="entry name" value="DAD_dom"/>
</dbReference>
<dbReference type="InterPro" id="IPR044933">
    <property type="entry name" value="DIA_GBD_sf"/>
</dbReference>
<dbReference type="InterPro" id="IPR010465">
    <property type="entry name" value="Drf_DAD"/>
</dbReference>
<dbReference type="InterPro" id="IPR015425">
    <property type="entry name" value="FH2_Formin"/>
</dbReference>
<dbReference type="InterPro" id="IPR042201">
    <property type="entry name" value="FH2_Formin_sf"/>
</dbReference>
<dbReference type="InterPro" id="IPR010472">
    <property type="entry name" value="FH3_dom"/>
</dbReference>
<dbReference type="InterPro" id="IPR051412">
    <property type="entry name" value="Formin_Homology_Diaphanous_sf"/>
</dbReference>
<dbReference type="InterPro" id="IPR014768">
    <property type="entry name" value="GBD/FH3_dom"/>
</dbReference>
<dbReference type="InterPro" id="IPR010473">
    <property type="entry name" value="GTPase-bd"/>
</dbReference>
<dbReference type="PANTHER" id="PTHR45691">
    <property type="entry name" value="PROTEIN DIAPHANOUS"/>
    <property type="match status" value="1"/>
</dbReference>
<dbReference type="PANTHER" id="PTHR45691:SF9">
    <property type="entry name" value="PROTEIN DIAPHANOUS HOMOLOG 3"/>
    <property type="match status" value="1"/>
</dbReference>
<dbReference type="Pfam" id="PF06345">
    <property type="entry name" value="Drf_DAD"/>
    <property type="match status" value="1"/>
</dbReference>
<dbReference type="Pfam" id="PF06367">
    <property type="entry name" value="Drf_FH3"/>
    <property type="match status" value="1"/>
</dbReference>
<dbReference type="Pfam" id="PF06371">
    <property type="entry name" value="Drf_GBD"/>
    <property type="match status" value="1"/>
</dbReference>
<dbReference type="Pfam" id="PF02181">
    <property type="entry name" value="FH2"/>
    <property type="match status" value="1"/>
</dbReference>
<dbReference type="SMART" id="SM01139">
    <property type="entry name" value="Drf_FH3"/>
    <property type="match status" value="1"/>
</dbReference>
<dbReference type="SMART" id="SM01140">
    <property type="entry name" value="Drf_GBD"/>
    <property type="match status" value="1"/>
</dbReference>
<dbReference type="SMART" id="SM00498">
    <property type="entry name" value="FH2"/>
    <property type="match status" value="1"/>
</dbReference>
<dbReference type="SUPFAM" id="SSF48371">
    <property type="entry name" value="ARM repeat"/>
    <property type="match status" value="1"/>
</dbReference>
<dbReference type="SUPFAM" id="SSF101447">
    <property type="entry name" value="Formin homology 2 domain (FH2 domain)"/>
    <property type="match status" value="1"/>
</dbReference>
<dbReference type="PROSITE" id="PS51231">
    <property type="entry name" value="DAD"/>
    <property type="match status" value="1"/>
</dbReference>
<dbReference type="PROSITE" id="PS51444">
    <property type="entry name" value="FH2"/>
    <property type="match status" value="1"/>
</dbReference>
<dbReference type="PROSITE" id="PS51232">
    <property type="entry name" value="GBD_FH3"/>
    <property type="match status" value="1"/>
</dbReference>
<evidence type="ECO:0000250" key="1">
    <source>
        <dbReference type="UniProtKB" id="Q9NSV4"/>
    </source>
</evidence>
<evidence type="ECO:0000255" key="2"/>
<evidence type="ECO:0000255" key="3">
    <source>
        <dbReference type="PROSITE-ProRule" id="PRU00577"/>
    </source>
</evidence>
<evidence type="ECO:0000255" key="4">
    <source>
        <dbReference type="PROSITE-ProRule" id="PRU00579"/>
    </source>
</evidence>
<evidence type="ECO:0000255" key="5">
    <source>
        <dbReference type="PROSITE-ProRule" id="PRU00774"/>
    </source>
</evidence>
<evidence type="ECO:0000256" key="6">
    <source>
        <dbReference type="SAM" id="MobiDB-lite"/>
    </source>
</evidence>
<evidence type="ECO:0000269" key="7">
    <source>
    </source>
</evidence>
<evidence type="ECO:0000269" key="8">
    <source>
    </source>
</evidence>
<evidence type="ECO:0000269" key="9">
    <source>
    </source>
</evidence>
<evidence type="ECO:0000269" key="10">
    <source>
    </source>
</evidence>
<evidence type="ECO:0000303" key="11">
    <source>
    </source>
</evidence>
<evidence type="ECO:0000305" key="12"/>